<evidence type="ECO:0000255" key="1">
    <source>
        <dbReference type="HAMAP-Rule" id="MF_01717"/>
    </source>
</evidence>
<organism>
    <name type="scientific">Rhizobium johnstonii (strain DSM 114642 / LMG 32736 / 3841)</name>
    <name type="common">Rhizobium leguminosarum bv. viciae</name>
    <dbReference type="NCBI Taxonomy" id="216596"/>
    <lineage>
        <taxon>Bacteria</taxon>
        <taxon>Pseudomonadati</taxon>
        <taxon>Pseudomonadota</taxon>
        <taxon>Alphaproteobacteria</taxon>
        <taxon>Hyphomicrobiales</taxon>
        <taxon>Rhizobiaceae</taxon>
        <taxon>Rhizobium/Agrobacterium group</taxon>
        <taxon>Rhizobium</taxon>
        <taxon>Rhizobium johnstonii</taxon>
    </lineage>
</organism>
<gene>
    <name type="ordered locus">RL4654</name>
</gene>
<protein>
    <recommendedName>
        <fullName evidence="1">Putative ribose/galactose/methyl galactoside import ATP-binding protein</fullName>
        <ecNumber evidence="1">7.5.2.11</ecNumber>
        <ecNumber evidence="1">7.5.2.7</ecNumber>
    </recommendedName>
</protein>
<name>RGMG_RHIJ3</name>
<keyword id="KW-0067">ATP-binding</keyword>
<keyword id="KW-0997">Cell inner membrane</keyword>
<keyword id="KW-1003">Cell membrane</keyword>
<keyword id="KW-0472">Membrane</keyword>
<keyword id="KW-0547">Nucleotide-binding</keyword>
<keyword id="KW-0677">Repeat</keyword>
<keyword id="KW-0762">Sugar transport</keyword>
<keyword id="KW-1278">Translocase</keyword>
<keyword id="KW-0813">Transport</keyword>
<reference key="1">
    <citation type="journal article" date="2006" name="Genome Biol.">
        <title>The genome of Rhizobium leguminosarum has recognizable core and accessory components.</title>
        <authorList>
            <person name="Young J.P.W."/>
            <person name="Crossman L.C."/>
            <person name="Johnston A.W.B."/>
            <person name="Thomson N.R."/>
            <person name="Ghazoui Z.F."/>
            <person name="Hull K.H."/>
            <person name="Wexler M."/>
            <person name="Curson A.R.J."/>
            <person name="Todd J.D."/>
            <person name="Poole P.S."/>
            <person name="Mauchline T.H."/>
            <person name="East A.K."/>
            <person name="Quail M.A."/>
            <person name="Churcher C."/>
            <person name="Arrowsmith C."/>
            <person name="Cherevach I."/>
            <person name="Chillingworth T."/>
            <person name="Clarke K."/>
            <person name="Cronin A."/>
            <person name="Davis P."/>
            <person name="Fraser A."/>
            <person name="Hance Z."/>
            <person name="Hauser H."/>
            <person name="Jagels K."/>
            <person name="Moule S."/>
            <person name="Mungall K."/>
            <person name="Norbertczak H."/>
            <person name="Rabbinowitsch E."/>
            <person name="Sanders M."/>
            <person name="Simmonds M."/>
            <person name="Whitehead S."/>
            <person name="Parkhill J."/>
        </authorList>
    </citation>
    <scope>NUCLEOTIDE SEQUENCE [LARGE SCALE GENOMIC DNA]</scope>
    <source>
        <strain>DSM 114642 / LMG 32736 / 3841</strain>
    </source>
</reference>
<comment type="function">
    <text evidence="1">Part of an ABC transporter complex involved in carbohydrate import. Could be involved in ribose, galactose and/or methyl galactoside import. Responsible for energy coupling to the transport system.</text>
</comment>
<comment type="catalytic activity">
    <reaction evidence="1">
        <text>D-ribose(out) + ATP + H2O = D-ribose(in) + ADP + phosphate + H(+)</text>
        <dbReference type="Rhea" id="RHEA:29903"/>
        <dbReference type="ChEBI" id="CHEBI:15377"/>
        <dbReference type="ChEBI" id="CHEBI:15378"/>
        <dbReference type="ChEBI" id="CHEBI:30616"/>
        <dbReference type="ChEBI" id="CHEBI:43474"/>
        <dbReference type="ChEBI" id="CHEBI:47013"/>
        <dbReference type="ChEBI" id="CHEBI:456216"/>
        <dbReference type="EC" id="7.5.2.7"/>
    </reaction>
</comment>
<comment type="catalytic activity">
    <reaction evidence="1">
        <text>D-galactose(out) + ATP + H2O = D-galactose(in) + ADP + phosphate + H(+)</text>
        <dbReference type="Rhea" id="RHEA:60156"/>
        <dbReference type="ChEBI" id="CHEBI:4139"/>
        <dbReference type="ChEBI" id="CHEBI:15377"/>
        <dbReference type="ChEBI" id="CHEBI:15378"/>
        <dbReference type="ChEBI" id="CHEBI:30616"/>
        <dbReference type="ChEBI" id="CHEBI:43474"/>
        <dbReference type="ChEBI" id="CHEBI:456216"/>
        <dbReference type="EC" id="7.5.2.11"/>
    </reaction>
</comment>
<comment type="subcellular location">
    <subcellularLocation>
        <location evidence="1">Cell inner membrane</location>
        <topology evidence="1">Peripheral membrane protein</topology>
    </subcellularLocation>
</comment>
<comment type="similarity">
    <text evidence="1">Belongs to the ABC transporter superfamily. Carbohydrate importer 2 (CUT2) (TC 3.A.1.2) family.</text>
</comment>
<dbReference type="EC" id="7.5.2.11" evidence="1"/>
<dbReference type="EC" id="7.5.2.7" evidence="1"/>
<dbReference type="EMBL" id="AM236080">
    <property type="protein sequence ID" value="CAK10137.1"/>
    <property type="molecule type" value="Genomic_DNA"/>
</dbReference>
<dbReference type="RefSeq" id="WP_011653997.1">
    <property type="nucleotide sequence ID" value="NC_008380.1"/>
</dbReference>
<dbReference type="SMR" id="Q1MAA2"/>
<dbReference type="EnsemblBacteria" id="CAK10137">
    <property type="protein sequence ID" value="CAK10137"/>
    <property type="gene ID" value="RL4654"/>
</dbReference>
<dbReference type="KEGG" id="rle:RL4654"/>
<dbReference type="eggNOG" id="COG1129">
    <property type="taxonomic scope" value="Bacteria"/>
</dbReference>
<dbReference type="HOGENOM" id="CLU_000604_92_3_5"/>
<dbReference type="Proteomes" id="UP000006575">
    <property type="component" value="Chromosome"/>
</dbReference>
<dbReference type="GO" id="GO:0005886">
    <property type="term" value="C:plasma membrane"/>
    <property type="evidence" value="ECO:0007669"/>
    <property type="project" value="UniProtKB-SubCell"/>
</dbReference>
<dbReference type="GO" id="GO:0015611">
    <property type="term" value="F:ABC-type D-ribose transporter activity"/>
    <property type="evidence" value="ECO:0007669"/>
    <property type="project" value="UniProtKB-EC"/>
</dbReference>
<dbReference type="GO" id="GO:0005524">
    <property type="term" value="F:ATP binding"/>
    <property type="evidence" value="ECO:0007669"/>
    <property type="project" value="UniProtKB-KW"/>
</dbReference>
<dbReference type="GO" id="GO:0016887">
    <property type="term" value="F:ATP hydrolysis activity"/>
    <property type="evidence" value="ECO:0007669"/>
    <property type="project" value="InterPro"/>
</dbReference>
<dbReference type="CDD" id="cd03216">
    <property type="entry name" value="ABC_Carb_Monos_I"/>
    <property type="match status" value="1"/>
</dbReference>
<dbReference type="CDD" id="cd03215">
    <property type="entry name" value="ABC_Carb_Monos_II"/>
    <property type="match status" value="1"/>
</dbReference>
<dbReference type="FunFam" id="3.40.50.300:FF:000126">
    <property type="entry name" value="Galactose/methyl galactoside import ATP-binding protein MglA"/>
    <property type="match status" value="1"/>
</dbReference>
<dbReference type="FunFam" id="3.40.50.300:FF:000127">
    <property type="entry name" value="Ribose import ATP-binding protein RbsA"/>
    <property type="match status" value="1"/>
</dbReference>
<dbReference type="Gene3D" id="3.40.50.300">
    <property type="entry name" value="P-loop containing nucleotide triphosphate hydrolases"/>
    <property type="match status" value="2"/>
</dbReference>
<dbReference type="InterPro" id="IPR003593">
    <property type="entry name" value="AAA+_ATPase"/>
</dbReference>
<dbReference type="InterPro" id="IPR050107">
    <property type="entry name" value="ABC_carbohydrate_import_ATPase"/>
</dbReference>
<dbReference type="InterPro" id="IPR003439">
    <property type="entry name" value="ABC_transporter-like_ATP-bd"/>
</dbReference>
<dbReference type="InterPro" id="IPR017871">
    <property type="entry name" value="ABC_transporter-like_CS"/>
</dbReference>
<dbReference type="InterPro" id="IPR027417">
    <property type="entry name" value="P-loop_NTPase"/>
</dbReference>
<dbReference type="PANTHER" id="PTHR43790">
    <property type="entry name" value="CARBOHYDRATE TRANSPORT ATP-BINDING PROTEIN MG119-RELATED"/>
    <property type="match status" value="1"/>
</dbReference>
<dbReference type="PANTHER" id="PTHR43790:SF7">
    <property type="entry name" value="GALACTOSE_METHYL GALACTOSIDE IMPORT ATP-BINDING PROTEIN MGLA"/>
    <property type="match status" value="1"/>
</dbReference>
<dbReference type="Pfam" id="PF00005">
    <property type="entry name" value="ABC_tran"/>
    <property type="match status" value="2"/>
</dbReference>
<dbReference type="SMART" id="SM00382">
    <property type="entry name" value="AAA"/>
    <property type="match status" value="2"/>
</dbReference>
<dbReference type="SUPFAM" id="SSF52540">
    <property type="entry name" value="P-loop containing nucleoside triphosphate hydrolases"/>
    <property type="match status" value="2"/>
</dbReference>
<dbReference type="PROSITE" id="PS00211">
    <property type="entry name" value="ABC_TRANSPORTER_1"/>
    <property type="match status" value="1"/>
</dbReference>
<dbReference type="PROSITE" id="PS50893">
    <property type="entry name" value="ABC_TRANSPORTER_2"/>
    <property type="match status" value="2"/>
</dbReference>
<dbReference type="PROSITE" id="PS51260">
    <property type="entry name" value="MGLA"/>
    <property type="match status" value="1"/>
</dbReference>
<dbReference type="PROSITE" id="PS51254">
    <property type="entry name" value="RBSA"/>
    <property type="match status" value="1"/>
</dbReference>
<sequence length="513" mass="56826">MAVSPTTMAAVRASGAVPNAEYLLSAEGVRKEFPGVVALDDVQFRLKRASVHALMGENGAGKSTLMKILAGIYTPDKGDIRLKGIEIQLKSPLDALENGIAMIHQELNLMPFMTVAENIWIRREPKNRLGFIDHGVMHRMTEELFTRLNIAIDPDIEVRFLSVANRQMVEIAKAVSYNSDVLIMDEPTSALTEREVEHLFRIIRDLKAQGIGIVYITHKMNELFEIADEFSVFRDGRYIGTHASTDVTRDDIIRMMVGREITQMFPKEEVPIGEVMLSVKDLCLNGVFKNVSFEVRAGEILGVAGLVGSGRSNVAETLFGVTPASSGSIELYGKPVAISSPTEAIRNRMAFLTEDRKDTGCLLILDILENMQIAVLQDRYVKGGFVQQGAVEATCEDMAKKLRVKTPNLYERVENLSGGNQQKVLIGRWLLTNPRILILDEPTRGIDVGAKAEIHRLVTEMARDGVAVVMISSEMPEVLGMSDRIMVMHEGRVTGFLNRDEATQIKVMELAAQ</sequence>
<proteinExistence type="inferred from homology"/>
<feature type="chain" id="PRO_0000262989" description="Putative ribose/galactose/methyl galactoside import ATP-binding protein">
    <location>
        <begin position="1"/>
        <end position="513"/>
    </location>
</feature>
<feature type="domain" description="ABC transporter 1" evidence="1">
    <location>
        <begin position="24"/>
        <end position="260"/>
    </location>
</feature>
<feature type="domain" description="ABC transporter 2" evidence="1">
    <location>
        <begin position="270"/>
        <end position="510"/>
    </location>
</feature>
<feature type="binding site" evidence="1">
    <location>
        <begin position="56"/>
        <end position="63"/>
    </location>
    <ligand>
        <name>ATP</name>
        <dbReference type="ChEBI" id="CHEBI:30616"/>
    </ligand>
</feature>
<accession>Q1MAA2</accession>